<protein>
    <recommendedName>
        <fullName>Calcium-binding protein L</fullName>
    </recommendedName>
</protein>
<dbReference type="EMBL" id="AY655130">
    <property type="protein sequence ID" value="AAT72746.1"/>
    <property type="molecule type" value="mRNA"/>
</dbReference>
<dbReference type="EMBL" id="AAFI02000125">
    <property type="protein sequence ID" value="EAL63014.1"/>
    <property type="molecule type" value="Genomic_DNA"/>
</dbReference>
<dbReference type="RefSeq" id="XP_636519.1">
    <property type="nucleotide sequence ID" value="XM_631427.1"/>
</dbReference>
<dbReference type="SMR" id="Q6DN52"/>
<dbReference type="STRING" id="44689.Q6DN52"/>
<dbReference type="PaxDb" id="44689-DDB0231012"/>
<dbReference type="EnsemblProtists" id="EAL63014">
    <property type="protein sequence ID" value="EAL63014"/>
    <property type="gene ID" value="DDB_G0288785"/>
</dbReference>
<dbReference type="GeneID" id="8626804"/>
<dbReference type="KEGG" id="ddi:DDB_G0288785"/>
<dbReference type="dictyBase" id="DDB_G0288785">
    <property type="gene designation" value="cbpL"/>
</dbReference>
<dbReference type="VEuPathDB" id="AmoebaDB:DDB_G0288785"/>
<dbReference type="eggNOG" id="KOG0044">
    <property type="taxonomic scope" value="Eukaryota"/>
</dbReference>
<dbReference type="HOGENOM" id="CLU_1436878_0_0_1"/>
<dbReference type="InParanoid" id="Q6DN52"/>
<dbReference type="OMA" id="RFCDICY"/>
<dbReference type="PhylomeDB" id="Q6DN52"/>
<dbReference type="Reactome" id="R-DDI-2514859">
    <property type="pathway name" value="Inactivation, recovery and regulation of the phototransduction cascade"/>
</dbReference>
<dbReference type="PRO" id="PR:Q6DN52"/>
<dbReference type="Proteomes" id="UP000002195">
    <property type="component" value="Chromosome 5"/>
</dbReference>
<dbReference type="GO" id="GO:0005509">
    <property type="term" value="F:calcium ion binding"/>
    <property type="evidence" value="ECO:0000250"/>
    <property type="project" value="dictyBase"/>
</dbReference>
<dbReference type="GO" id="GO:0009966">
    <property type="term" value="P:regulation of signal transduction"/>
    <property type="evidence" value="ECO:0000318"/>
    <property type="project" value="GO_Central"/>
</dbReference>
<dbReference type="CDD" id="cd00051">
    <property type="entry name" value="EFh"/>
    <property type="match status" value="1"/>
</dbReference>
<dbReference type="FunFam" id="1.10.238.10:FF:000009">
    <property type="entry name" value="Visinin-like protein 1"/>
    <property type="match status" value="1"/>
</dbReference>
<dbReference type="Gene3D" id="1.10.238.10">
    <property type="entry name" value="EF-hand"/>
    <property type="match status" value="1"/>
</dbReference>
<dbReference type="InterPro" id="IPR011992">
    <property type="entry name" value="EF-hand-dom_pair"/>
</dbReference>
<dbReference type="InterPro" id="IPR018247">
    <property type="entry name" value="EF_Hand_1_Ca_BS"/>
</dbReference>
<dbReference type="InterPro" id="IPR002048">
    <property type="entry name" value="EF_hand_dom"/>
</dbReference>
<dbReference type="InterPro" id="IPR028846">
    <property type="entry name" value="Recoverin"/>
</dbReference>
<dbReference type="PANTHER" id="PTHR23055">
    <property type="entry name" value="CALCIUM BINDING PROTEINS"/>
    <property type="match status" value="1"/>
</dbReference>
<dbReference type="PANTHER" id="PTHR23055:SF74">
    <property type="entry name" value="CALCIUM-BINDING PROTEIN L"/>
    <property type="match status" value="1"/>
</dbReference>
<dbReference type="Pfam" id="PF13499">
    <property type="entry name" value="EF-hand_7"/>
    <property type="match status" value="1"/>
</dbReference>
<dbReference type="Pfam" id="PF13833">
    <property type="entry name" value="EF-hand_8"/>
    <property type="match status" value="1"/>
</dbReference>
<dbReference type="PRINTS" id="PR00450">
    <property type="entry name" value="RECOVERIN"/>
</dbReference>
<dbReference type="SMART" id="SM00054">
    <property type="entry name" value="EFh"/>
    <property type="match status" value="2"/>
</dbReference>
<dbReference type="SUPFAM" id="SSF47473">
    <property type="entry name" value="EF-hand"/>
    <property type="match status" value="1"/>
</dbReference>
<dbReference type="PROSITE" id="PS00018">
    <property type="entry name" value="EF_HAND_1"/>
    <property type="match status" value="1"/>
</dbReference>
<dbReference type="PROSITE" id="PS50222">
    <property type="entry name" value="EF_HAND_2"/>
    <property type="match status" value="3"/>
</dbReference>
<reference key="1">
    <citation type="journal article" date="2004" name="Dev. Growth Differ.">
        <title>Disruption of the NCS-1/frequenin-related ncsA gene in Dictyostelium discoideum accelerates development.</title>
        <authorList>
            <person name="Coukell B."/>
            <person name="Cameron A."/>
            <person name="Perusini S."/>
            <person name="Shim K."/>
        </authorList>
    </citation>
    <scope>NUCLEOTIDE SEQUENCE [MRNA]</scope>
    <source>
        <strain>AX4</strain>
    </source>
</reference>
<reference key="2">
    <citation type="journal article" date="2005" name="Nature">
        <title>The genome of the social amoeba Dictyostelium discoideum.</title>
        <authorList>
            <person name="Eichinger L."/>
            <person name="Pachebat J.A."/>
            <person name="Gloeckner G."/>
            <person name="Rajandream M.A."/>
            <person name="Sucgang R."/>
            <person name="Berriman M."/>
            <person name="Song J."/>
            <person name="Olsen R."/>
            <person name="Szafranski K."/>
            <person name="Xu Q."/>
            <person name="Tunggal B."/>
            <person name="Kummerfeld S."/>
            <person name="Madera M."/>
            <person name="Konfortov B.A."/>
            <person name="Rivero F."/>
            <person name="Bankier A.T."/>
            <person name="Lehmann R."/>
            <person name="Hamlin N."/>
            <person name="Davies R."/>
            <person name="Gaudet P."/>
            <person name="Fey P."/>
            <person name="Pilcher K."/>
            <person name="Chen G."/>
            <person name="Saunders D."/>
            <person name="Sodergren E.J."/>
            <person name="Davis P."/>
            <person name="Kerhornou A."/>
            <person name="Nie X."/>
            <person name="Hall N."/>
            <person name="Anjard C."/>
            <person name="Hemphill L."/>
            <person name="Bason N."/>
            <person name="Farbrother P."/>
            <person name="Desany B."/>
            <person name="Just E."/>
            <person name="Morio T."/>
            <person name="Rost R."/>
            <person name="Churcher C.M."/>
            <person name="Cooper J."/>
            <person name="Haydock S."/>
            <person name="van Driessche N."/>
            <person name="Cronin A."/>
            <person name="Goodhead I."/>
            <person name="Muzny D.M."/>
            <person name="Mourier T."/>
            <person name="Pain A."/>
            <person name="Lu M."/>
            <person name="Harper D."/>
            <person name="Lindsay R."/>
            <person name="Hauser H."/>
            <person name="James K.D."/>
            <person name="Quiles M."/>
            <person name="Madan Babu M."/>
            <person name="Saito T."/>
            <person name="Buchrieser C."/>
            <person name="Wardroper A."/>
            <person name="Felder M."/>
            <person name="Thangavelu M."/>
            <person name="Johnson D."/>
            <person name="Knights A."/>
            <person name="Loulseged H."/>
            <person name="Mungall K.L."/>
            <person name="Oliver K."/>
            <person name="Price C."/>
            <person name="Quail M.A."/>
            <person name="Urushihara H."/>
            <person name="Hernandez J."/>
            <person name="Rabbinowitsch E."/>
            <person name="Steffen D."/>
            <person name="Sanders M."/>
            <person name="Ma J."/>
            <person name="Kohara Y."/>
            <person name="Sharp S."/>
            <person name="Simmonds M.N."/>
            <person name="Spiegler S."/>
            <person name="Tivey A."/>
            <person name="Sugano S."/>
            <person name="White B."/>
            <person name="Walker D."/>
            <person name="Woodward J.R."/>
            <person name="Winckler T."/>
            <person name="Tanaka Y."/>
            <person name="Shaulsky G."/>
            <person name="Schleicher M."/>
            <person name="Weinstock G.M."/>
            <person name="Rosenthal A."/>
            <person name="Cox E.C."/>
            <person name="Chisholm R.L."/>
            <person name="Gibbs R.A."/>
            <person name="Loomis W.F."/>
            <person name="Platzer M."/>
            <person name="Kay R.R."/>
            <person name="Williams J.G."/>
            <person name="Dear P.H."/>
            <person name="Noegel A.A."/>
            <person name="Barrell B.G."/>
            <person name="Kuspa A."/>
        </authorList>
    </citation>
    <scope>NUCLEOTIDE SEQUENCE [LARGE SCALE GENOMIC DNA]</scope>
    <source>
        <strain>AX4</strain>
    </source>
</reference>
<gene>
    <name type="primary">cbpL</name>
    <name type="ORF">DDB_G0288785</name>
</gene>
<organism>
    <name type="scientific">Dictyostelium discoideum</name>
    <name type="common">Social amoeba</name>
    <dbReference type="NCBI Taxonomy" id="44689"/>
    <lineage>
        <taxon>Eukaryota</taxon>
        <taxon>Amoebozoa</taxon>
        <taxon>Evosea</taxon>
        <taxon>Eumycetozoa</taxon>
        <taxon>Dictyostelia</taxon>
        <taxon>Dictyosteliales</taxon>
        <taxon>Dictyosteliaceae</taxon>
        <taxon>Dictyostelium</taxon>
    </lineage>
</organism>
<comment type="similarity">
    <text evidence="3">Belongs to the recoverin family.</text>
</comment>
<feature type="initiator methionine" description="Removed" evidence="1">
    <location>
        <position position="1"/>
    </location>
</feature>
<feature type="chain" id="PRO_0000323766" description="Calcium-binding protein L">
    <location>
        <begin position="2"/>
        <end position="191"/>
    </location>
</feature>
<feature type="domain" description="EF-hand 1" evidence="2">
    <location>
        <begin position="25"/>
        <end position="59"/>
    </location>
</feature>
<feature type="domain" description="EF-hand 2" evidence="2">
    <location>
        <begin position="60"/>
        <end position="95"/>
    </location>
</feature>
<feature type="domain" description="EF-hand 3" evidence="2">
    <location>
        <begin position="96"/>
        <end position="131"/>
    </location>
</feature>
<feature type="binding site" evidence="2">
    <location>
        <position position="73"/>
    </location>
    <ligand>
        <name>Ca(2+)</name>
        <dbReference type="ChEBI" id="CHEBI:29108"/>
    </ligand>
</feature>
<feature type="binding site" evidence="2">
    <location>
        <position position="75"/>
    </location>
    <ligand>
        <name>Ca(2+)</name>
        <dbReference type="ChEBI" id="CHEBI:29108"/>
    </ligand>
</feature>
<feature type="binding site" evidence="2">
    <location>
        <position position="77"/>
    </location>
    <ligand>
        <name>Ca(2+)</name>
        <dbReference type="ChEBI" id="CHEBI:29108"/>
    </ligand>
</feature>
<feature type="binding site" evidence="2">
    <location>
        <position position="79"/>
    </location>
    <ligand>
        <name>Ca(2+)</name>
        <dbReference type="ChEBI" id="CHEBI:29108"/>
    </ligand>
</feature>
<feature type="binding site" evidence="2">
    <location>
        <position position="84"/>
    </location>
    <ligand>
        <name>Ca(2+)</name>
        <dbReference type="ChEBI" id="CHEBI:29108"/>
    </ligand>
</feature>
<feature type="lipid moiety-binding region" description="N-myristoyl glycine" evidence="1">
    <location>
        <position position="2"/>
    </location>
</feature>
<sequence length="191" mass="21694">MGQGNSKLSSDDIKKIMSKTNYTSEQVSQILKDYQSVNQDSKGLSLEEFKSFFSIRFKDYDDASILHMFKIFDSDKNGRISFKEFVGALFIITKSPVSDKLSFLFDMFDRDLNGYLDLEESYNILKLALNTSVGLGFDVSQAGSFAEGLLNSMNRNSHGGITKEEFIKKASVNDTFVRMLCLYQSYDTLLY</sequence>
<name>CBPL_DICDI</name>
<accession>Q6DN52</accession>
<accession>Q54IF8</accession>
<evidence type="ECO:0000255" key="1"/>
<evidence type="ECO:0000255" key="2">
    <source>
        <dbReference type="PROSITE-ProRule" id="PRU00448"/>
    </source>
</evidence>
<evidence type="ECO:0000305" key="3"/>
<keyword id="KW-0106">Calcium</keyword>
<keyword id="KW-0449">Lipoprotein</keyword>
<keyword id="KW-0479">Metal-binding</keyword>
<keyword id="KW-0519">Myristate</keyword>
<keyword id="KW-1185">Reference proteome</keyword>
<keyword id="KW-0677">Repeat</keyword>
<proteinExistence type="evidence at transcript level"/>